<comment type="subunit">
    <text evidence="1">Part of the 50S ribosomal subunit.</text>
</comment>
<comment type="subcellular location">
    <subcellularLocation>
        <location>Plastid</location>
        <location>Chloroplast</location>
    </subcellularLocation>
</comment>
<comment type="similarity">
    <text evidence="1">Belongs to the universal ribosomal protein uL16 family.</text>
</comment>
<gene>
    <name evidence="1" type="primary">rpl16</name>
</gene>
<reference key="1">
    <citation type="journal article" date="2007" name="Mol. Biol. Evol.">
        <title>The complete chloroplast genome of the chlorarachniophyte Bigelowiella natans: evidence for independent origins of chlorarachniophyte and euglenid secondary endosymbionts.</title>
        <authorList>
            <person name="Rogers M.B."/>
            <person name="Gilson P.R."/>
            <person name="Su V."/>
            <person name="McFadden G.I."/>
            <person name="Keeling P.J."/>
        </authorList>
    </citation>
    <scope>NUCLEOTIDE SEQUENCE [LARGE SCALE GENOMIC DNA]</scope>
</reference>
<protein>
    <recommendedName>
        <fullName evidence="1">Large ribosomal subunit protein uL16c</fullName>
    </recommendedName>
    <alternativeName>
        <fullName evidence="2">50S ribosomal protein L16, chloroplastic</fullName>
    </alternativeName>
</protein>
<accession>Q06J58</accession>
<proteinExistence type="inferred from homology"/>
<sequence>MLSPKRTKFRRYHRIRSKGTANCSNTIVFGEFGIQALTCSWITSRQIEAGRRAITRYVKRGGKLWIRIFPDKPITFRPPETRMGSGKGAPELWVSVVRSGNMLYEILGVSEVTARGAMRIASYKLPVKTKFIKKVKN</sequence>
<evidence type="ECO:0000255" key="1">
    <source>
        <dbReference type="HAMAP-Rule" id="MF_01342"/>
    </source>
</evidence>
<evidence type="ECO:0000305" key="2"/>
<organism>
    <name type="scientific">Bigelowiella natans</name>
    <name type="common">Pedinomonas minutissima</name>
    <name type="synonym">Chlorarachnion sp. (strain CCMP621)</name>
    <dbReference type="NCBI Taxonomy" id="227086"/>
    <lineage>
        <taxon>Eukaryota</taxon>
        <taxon>Sar</taxon>
        <taxon>Rhizaria</taxon>
        <taxon>Cercozoa</taxon>
        <taxon>Chlorarachniophyceae</taxon>
        <taxon>Bigelowiella</taxon>
    </lineage>
</organism>
<keyword id="KW-0150">Chloroplast</keyword>
<keyword id="KW-0934">Plastid</keyword>
<keyword id="KW-0687">Ribonucleoprotein</keyword>
<keyword id="KW-0689">Ribosomal protein</keyword>
<name>RK16_BIGNA</name>
<feature type="chain" id="PRO_0000296334" description="Large ribosomal subunit protein uL16c">
    <location>
        <begin position="1"/>
        <end position="137"/>
    </location>
</feature>
<dbReference type="EMBL" id="DQ851108">
    <property type="protein sequence ID" value="ABG91401.1"/>
    <property type="molecule type" value="Genomic_DNA"/>
</dbReference>
<dbReference type="RefSeq" id="YP_778569.1">
    <property type="nucleotide sequence ID" value="NC_008408.1"/>
</dbReference>
<dbReference type="SMR" id="Q06J58"/>
<dbReference type="GeneID" id="4352986"/>
<dbReference type="GO" id="GO:0009507">
    <property type="term" value="C:chloroplast"/>
    <property type="evidence" value="ECO:0007669"/>
    <property type="project" value="UniProtKB-SubCell"/>
</dbReference>
<dbReference type="GO" id="GO:0005762">
    <property type="term" value="C:mitochondrial large ribosomal subunit"/>
    <property type="evidence" value="ECO:0007669"/>
    <property type="project" value="TreeGrafter"/>
</dbReference>
<dbReference type="GO" id="GO:0019843">
    <property type="term" value="F:rRNA binding"/>
    <property type="evidence" value="ECO:0007669"/>
    <property type="project" value="InterPro"/>
</dbReference>
<dbReference type="GO" id="GO:0003735">
    <property type="term" value="F:structural constituent of ribosome"/>
    <property type="evidence" value="ECO:0007669"/>
    <property type="project" value="InterPro"/>
</dbReference>
<dbReference type="GO" id="GO:0032543">
    <property type="term" value="P:mitochondrial translation"/>
    <property type="evidence" value="ECO:0007669"/>
    <property type="project" value="TreeGrafter"/>
</dbReference>
<dbReference type="CDD" id="cd01433">
    <property type="entry name" value="Ribosomal_L16_L10e"/>
    <property type="match status" value="1"/>
</dbReference>
<dbReference type="FunFam" id="3.90.1170.10:FF:000001">
    <property type="entry name" value="50S ribosomal protein L16"/>
    <property type="match status" value="1"/>
</dbReference>
<dbReference type="Gene3D" id="3.90.1170.10">
    <property type="entry name" value="Ribosomal protein L10e/L16"/>
    <property type="match status" value="1"/>
</dbReference>
<dbReference type="HAMAP" id="MF_01342">
    <property type="entry name" value="Ribosomal_uL16"/>
    <property type="match status" value="1"/>
</dbReference>
<dbReference type="InterPro" id="IPR047873">
    <property type="entry name" value="Ribosomal_uL16"/>
</dbReference>
<dbReference type="InterPro" id="IPR000114">
    <property type="entry name" value="Ribosomal_uL16_bact-type"/>
</dbReference>
<dbReference type="InterPro" id="IPR020798">
    <property type="entry name" value="Ribosomal_uL16_CS"/>
</dbReference>
<dbReference type="InterPro" id="IPR016180">
    <property type="entry name" value="Ribosomal_uL16_dom"/>
</dbReference>
<dbReference type="InterPro" id="IPR036920">
    <property type="entry name" value="Ribosomal_uL16_sf"/>
</dbReference>
<dbReference type="NCBIfam" id="TIGR01164">
    <property type="entry name" value="rplP_bact"/>
    <property type="match status" value="1"/>
</dbReference>
<dbReference type="PANTHER" id="PTHR12220">
    <property type="entry name" value="50S/60S RIBOSOMAL PROTEIN L16"/>
    <property type="match status" value="1"/>
</dbReference>
<dbReference type="PANTHER" id="PTHR12220:SF13">
    <property type="entry name" value="LARGE RIBOSOMAL SUBUNIT PROTEIN UL16M"/>
    <property type="match status" value="1"/>
</dbReference>
<dbReference type="Pfam" id="PF00252">
    <property type="entry name" value="Ribosomal_L16"/>
    <property type="match status" value="1"/>
</dbReference>
<dbReference type="PRINTS" id="PR00060">
    <property type="entry name" value="RIBOSOMALL16"/>
</dbReference>
<dbReference type="SUPFAM" id="SSF54686">
    <property type="entry name" value="Ribosomal protein L16p/L10e"/>
    <property type="match status" value="1"/>
</dbReference>
<dbReference type="PROSITE" id="PS00586">
    <property type="entry name" value="RIBOSOMAL_L16_1"/>
    <property type="match status" value="1"/>
</dbReference>
<dbReference type="PROSITE" id="PS00701">
    <property type="entry name" value="RIBOSOMAL_L16_2"/>
    <property type="match status" value="1"/>
</dbReference>
<geneLocation type="chloroplast"/>